<sequence>MNLIQQLEAEQIAKFKESKSIPDFRPGDTLRVGVKVVEGERTRVQAYEGVCIARANKGMGSSFTVRKISFGEGVERVFPLYSPNVESIEVVRKGVVRRAKLYYLRGRRGKSARIAERRDNKPAAEAQEA</sequence>
<comment type="function">
    <text evidence="1">This protein is located at the 30S-50S ribosomal subunit interface and may play a role in the structure and function of the aminoacyl-tRNA binding site.</text>
</comment>
<comment type="similarity">
    <text evidence="1">Belongs to the bacterial ribosomal protein bL19 family.</text>
</comment>
<gene>
    <name evidence="1" type="primary">rplS</name>
    <name type="ordered locus">Swit_2663</name>
</gene>
<accession>A5V9Q3</accession>
<evidence type="ECO:0000255" key="1">
    <source>
        <dbReference type="HAMAP-Rule" id="MF_00402"/>
    </source>
</evidence>
<evidence type="ECO:0000305" key="2"/>
<organism>
    <name type="scientific">Rhizorhabdus wittichii (strain DSM 6014 / CCUG 31198 / JCM 15750 / NBRC 105917 / EY 4224 / RW1)</name>
    <name type="common">Sphingomonas wittichii</name>
    <dbReference type="NCBI Taxonomy" id="392499"/>
    <lineage>
        <taxon>Bacteria</taxon>
        <taxon>Pseudomonadati</taxon>
        <taxon>Pseudomonadota</taxon>
        <taxon>Alphaproteobacteria</taxon>
        <taxon>Sphingomonadales</taxon>
        <taxon>Sphingomonadaceae</taxon>
        <taxon>Rhizorhabdus</taxon>
    </lineage>
</organism>
<protein>
    <recommendedName>
        <fullName evidence="1">Large ribosomal subunit protein bL19</fullName>
    </recommendedName>
    <alternativeName>
        <fullName evidence="2">50S ribosomal protein L19</fullName>
    </alternativeName>
</protein>
<reference key="1">
    <citation type="journal article" date="2010" name="J. Bacteriol.">
        <title>Genome sequence of the dioxin-mineralizing bacterium Sphingomonas wittichii RW1.</title>
        <authorList>
            <person name="Miller T.R."/>
            <person name="Delcher A.L."/>
            <person name="Salzberg S.L."/>
            <person name="Saunders E."/>
            <person name="Detter J.C."/>
            <person name="Halden R.U."/>
        </authorList>
    </citation>
    <scope>NUCLEOTIDE SEQUENCE [LARGE SCALE GENOMIC DNA]</scope>
    <source>
        <strain>DSM 6014 / CCUG 31198 / JCM 15750 / NBRC 105917 / EY 4224 / RW1</strain>
    </source>
</reference>
<keyword id="KW-1185">Reference proteome</keyword>
<keyword id="KW-0687">Ribonucleoprotein</keyword>
<keyword id="KW-0689">Ribosomal protein</keyword>
<name>RL19_RHIWR</name>
<dbReference type="EMBL" id="CP000699">
    <property type="protein sequence ID" value="ABQ69019.1"/>
    <property type="molecule type" value="Genomic_DNA"/>
</dbReference>
<dbReference type="SMR" id="A5V9Q3"/>
<dbReference type="STRING" id="392499.Swit_2663"/>
<dbReference type="PaxDb" id="392499-Swit_2663"/>
<dbReference type="KEGG" id="swi:Swit_2663"/>
<dbReference type="eggNOG" id="COG0335">
    <property type="taxonomic scope" value="Bacteria"/>
</dbReference>
<dbReference type="HOGENOM" id="CLU_103507_2_1_5"/>
<dbReference type="OrthoDB" id="9803541at2"/>
<dbReference type="Proteomes" id="UP000001989">
    <property type="component" value="Chromosome"/>
</dbReference>
<dbReference type="GO" id="GO:0022625">
    <property type="term" value="C:cytosolic large ribosomal subunit"/>
    <property type="evidence" value="ECO:0007669"/>
    <property type="project" value="TreeGrafter"/>
</dbReference>
<dbReference type="GO" id="GO:0003735">
    <property type="term" value="F:structural constituent of ribosome"/>
    <property type="evidence" value="ECO:0007669"/>
    <property type="project" value="InterPro"/>
</dbReference>
<dbReference type="GO" id="GO:0006412">
    <property type="term" value="P:translation"/>
    <property type="evidence" value="ECO:0007669"/>
    <property type="project" value="UniProtKB-UniRule"/>
</dbReference>
<dbReference type="FunFam" id="2.30.30.790:FF:000001">
    <property type="entry name" value="50S ribosomal protein L19"/>
    <property type="match status" value="1"/>
</dbReference>
<dbReference type="Gene3D" id="2.30.30.790">
    <property type="match status" value="1"/>
</dbReference>
<dbReference type="HAMAP" id="MF_00402">
    <property type="entry name" value="Ribosomal_bL19"/>
    <property type="match status" value="1"/>
</dbReference>
<dbReference type="InterPro" id="IPR001857">
    <property type="entry name" value="Ribosomal_bL19"/>
</dbReference>
<dbReference type="InterPro" id="IPR018257">
    <property type="entry name" value="Ribosomal_bL19_CS"/>
</dbReference>
<dbReference type="InterPro" id="IPR038657">
    <property type="entry name" value="Ribosomal_bL19_sf"/>
</dbReference>
<dbReference type="InterPro" id="IPR008991">
    <property type="entry name" value="Translation_prot_SH3-like_sf"/>
</dbReference>
<dbReference type="NCBIfam" id="TIGR01024">
    <property type="entry name" value="rplS_bact"/>
    <property type="match status" value="1"/>
</dbReference>
<dbReference type="PANTHER" id="PTHR15680:SF9">
    <property type="entry name" value="LARGE RIBOSOMAL SUBUNIT PROTEIN BL19M"/>
    <property type="match status" value="1"/>
</dbReference>
<dbReference type="PANTHER" id="PTHR15680">
    <property type="entry name" value="RIBOSOMAL PROTEIN L19"/>
    <property type="match status" value="1"/>
</dbReference>
<dbReference type="Pfam" id="PF01245">
    <property type="entry name" value="Ribosomal_L19"/>
    <property type="match status" value="1"/>
</dbReference>
<dbReference type="PIRSF" id="PIRSF002191">
    <property type="entry name" value="Ribosomal_L19"/>
    <property type="match status" value="1"/>
</dbReference>
<dbReference type="PRINTS" id="PR00061">
    <property type="entry name" value="RIBOSOMALL19"/>
</dbReference>
<dbReference type="SUPFAM" id="SSF50104">
    <property type="entry name" value="Translation proteins SH3-like domain"/>
    <property type="match status" value="1"/>
</dbReference>
<dbReference type="PROSITE" id="PS01015">
    <property type="entry name" value="RIBOSOMAL_L19"/>
    <property type="match status" value="1"/>
</dbReference>
<feature type="chain" id="PRO_1000049750" description="Large ribosomal subunit protein bL19">
    <location>
        <begin position="1"/>
        <end position="129"/>
    </location>
</feature>
<proteinExistence type="inferred from homology"/>